<gene>
    <name type="primary">cpeB</name>
</gene>
<comment type="function">
    <text>Light-harvesting photosynthetic bile pigment-protein from the phycobiliprotein complex.</text>
</comment>
<comment type="subunit">
    <text evidence="1">Heteromer of 6 alpha, 6 beta and one gamma chain.</text>
</comment>
<comment type="subcellular location">
    <subcellularLocation>
        <location evidence="1">Plastid</location>
        <location evidence="1">Chloroplast thylakoid membrane</location>
        <topology evidence="1">Peripheral membrane protein</topology>
        <orientation evidence="1">Stromal side</orientation>
    </subcellularLocation>
    <text evidence="1">Forms the periphery of the phycobilisome rod.</text>
</comment>
<comment type="PTM">
    <text>Contains two covalently linked phycoerythrobilin chromophores and one covalently linked phycourobilin chromophore.</text>
</comment>
<comment type="similarity">
    <text evidence="3">Belongs to the phycobiliprotein family.</text>
</comment>
<organism>
    <name type="scientific">Porphyridium purpureum</name>
    <name type="common">Red alga</name>
    <name type="synonym">Porphyridium cruentum</name>
    <dbReference type="NCBI Taxonomy" id="35688"/>
    <lineage>
        <taxon>Eukaryota</taxon>
        <taxon>Rhodophyta</taxon>
        <taxon>Bangiophyceae</taxon>
        <taxon>Porphyridiales</taxon>
        <taxon>Porphyridiaceae</taxon>
        <taxon>Porphyridium</taxon>
    </lineage>
</organism>
<keyword id="KW-0002">3D-structure</keyword>
<keyword id="KW-0042">Antenna complex</keyword>
<keyword id="KW-0089">Bile pigment</keyword>
<keyword id="KW-0150">Chloroplast</keyword>
<keyword id="KW-0157">Chromophore</keyword>
<keyword id="KW-0903">Direct protein sequencing</keyword>
<keyword id="KW-0249">Electron transport</keyword>
<keyword id="KW-0472">Membrane</keyword>
<keyword id="KW-0488">Methylation</keyword>
<keyword id="KW-0602">Photosynthesis</keyword>
<keyword id="KW-0605">Phycobilisome</keyword>
<keyword id="KW-0934">Plastid</keyword>
<keyword id="KW-0793">Thylakoid</keyword>
<keyword id="KW-0813">Transport</keyword>
<accession>P11393</accession>
<sequence>MLDAFSRVVVNSDAKAAYVGGSDLQALKSFIADGNKRLDAVNSIVSNASCMVSDAVSGMICENPGLISPGGNCYTNRRMAACLRDGEIILRYVSYALLAGDASVLEDRCLNGLKETYIALGVPTNSSIRAVSIMKAQAVAFITNTATERKMSFAAGDCTSLASEVASYFDRVGAAIS</sequence>
<reference key="1">
    <citation type="journal article" date="1989" name="Biol. Chem. Hoppe-Seyler">
        <title>The complete amino-acid sequence of the alpha and beta subunits of B-phycoerythrin from the rhodophytan alga Porphyridium cruentum.</title>
        <authorList>
            <person name="Sidler W."/>
            <person name="Kumpf B."/>
            <person name="Suter F."/>
            <person name="Klotz A.V."/>
            <person name="Glazer A.N."/>
            <person name="Zuber H."/>
        </authorList>
    </citation>
    <scope>PROTEIN SEQUENCE</scope>
    <scope>METHYLATION AT ASN-72</scope>
</reference>
<reference key="2">
    <citation type="journal article" date="1984" name="J. Biol. Chem.">
        <title>Bilin attachment sites in the alpha and beta subunits of B-phycoerythrin. Amino acid sequence studies.</title>
        <authorList>
            <person name="Lundell D.J."/>
            <person name="Glazer A.N."/>
            <person name="DeLange R.J."/>
            <person name="Brown D.M."/>
        </authorList>
    </citation>
    <scope>PROTEIN SEQUENCE OF 38-77; 79-84 AND 151-171</scope>
    <scope>CHROMOPHORE ATTACHMENT SITES</scope>
</reference>
<evidence type="ECO:0000250" key="1"/>
<evidence type="ECO:0000269" key="2">
    <source>
    </source>
</evidence>
<evidence type="ECO:0000305" key="3"/>
<evidence type="ECO:0007829" key="4">
    <source>
        <dbReference type="PDB" id="3V57"/>
    </source>
</evidence>
<evidence type="ECO:0007829" key="5">
    <source>
        <dbReference type="PDB" id="7LIX"/>
    </source>
</evidence>
<protein>
    <recommendedName>
        <fullName>B-phycoerythrin beta chain</fullName>
    </recommendedName>
</protein>
<dbReference type="PIR" id="S02818">
    <property type="entry name" value="S02818"/>
</dbReference>
<dbReference type="RefSeq" id="YP_008965770.1">
    <property type="nucleotide sequence ID" value="NC_023133.1"/>
</dbReference>
<dbReference type="PDB" id="3V57">
    <property type="method" value="X-ray"/>
    <property type="resolution" value="1.70 A"/>
    <property type="chains" value="B/D=1-177"/>
</dbReference>
<dbReference type="PDB" id="3V58">
    <property type="method" value="X-ray"/>
    <property type="resolution" value="1.85 A"/>
    <property type="chains" value="B/D=1-177"/>
</dbReference>
<dbReference type="PDB" id="6KGX">
    <property type="method" value="EM"/>
    <property type="resolution" value="2.80 A"/>
    <property type="chains" value="11/14/A5/AC/B1/B3/B4/B5/BC/BD/BE/BG/C5/C9/CC/CJ/D1/D3/D4/D8/DA/DD/DE/DG/E9/EJ/F1/F3/F4/F5=1-177"/>
</dbReference>
<dbReference type="PDB" id="7EZX">
    <property type="method" value="EM"/>
    <property type="resolution" value="3.00 A"/>
    <property type="chains" value="A5/A8/B3/B5/B8/BA/BC/BE/BG/BJ/BL/BN/BO/BQ/C4/C5/C8/CD/D3/DA/DB/DC/DE/DG/DJ/DL/DM/DN/DO/DQ=1-177"/>
</dbReference>
<dbReference type="PDB" id="7LIX">
    <property type="method" value="EM"/>
    <property type="resolution" value="2.80 A"/>
    <property type="chains" value="B/C/D=1-177"/>
</dbReference>
<dbReference type="PDB" id="7LIY">
    <property type="method" value="EM"/>
    <property type="resolution" value="2.80 A"/>
    <property type="chains" value="B/C=1-177"/>
</dbReference>
<dbReference type="PDB" id="7LIZ">
    <property type="method" value="EM"/>
    <property type="resolution" value="2.80 A"/>
    <property type="chains" value="B/C=1-177"/>
</dbReference>
<dbReference type="PDB" id="7LJ0">
    <property type="method" value="EM"/>
    <property type="resolution" value="2.80 A"/>
    <property type="chains" value="B=1-177"/>
</dbReference>
<dbReference type="PDB" id="7Y1A">
    <property type="method" value="EM"/>
    <property type="resolution" value="6.30 A"/>
    <property type="chains" value="1/q/s/u/w/y=1-177"/>
</dbReference>
<dbReference type="PDB" id="7Y4L">
    <property type="method" value="EM"/>
    <property type="resolution" value="3.30 A"/>
    <property type="chains" value="B1/B7/B8/B9/BA/BF/BG/BI/BK/C5/CA/CJ/D1/D4/D7/D8/D9/DA/DF/DG/DH/DI/DK/E5/EJ/F1/F4/F7/F8/F9=1-177"/>
</dbReference>
<dbReference type="PDB" id="7Y5E">
    <property type="method" value="EM"/>
    <property type="resolution" value="3.30 A"/>
    <property type="chains" value="18/1C/B5/B7/B9/BA/BB/BF/BI/BK/BP/CB/CD/CQ/D5/D7/D9/DA/DB/DF/DI/DJ/DK/DM/DP/ED/EQ/F5/F7/F9=1-177"/>
</dbReference>
<dbReference type="PDB" id="7Y7A">
    <property type="method" value="EM"/>
    <property type="resolution" value="4.30 A"/>
    <property type="chains" value="1G/1N/1X/1Y/B5/B6/BA/BD/BH/BJ/BL/BQ/BT/BU/BW/Ba/Bb/Bf/Bg/Bh/Bi/Bk/C2/CA/CF/CM/CW/Cc/D3/D5=1-177"/>
</dbReference>
<dbReference type="PDB" id="8B4N">
    <property type="method" value="X-ray"/>
    <property type="resolution" value="1.60 A"/>
    <property type="chains" value="BBB/BbB/DDD/DbD=1-177"/>
</dbReference>
<dbReference type="PDBsum" id="3V57"/>
<dbReference type="PDBsum" id="3V58"/>
<dbReference type="PDBsum" id="6KGX"/>
<dbReference type="PDBsum" id="7EZX"/>
<dbReference type="PDBsum" id="7LIX"/>
<dbReference type="PDBsum" id="7LIY"/>
<dbReference type="PDBsum" id="7LIZ"/>
<dbReference type="PDBsum" id="7LJ0"/>
<dbReference type="PDBsum" id="7Y1A"/>
<dbReference type="PDBsum" id="7Y4L"/>
<dbReference type="PDBsum" id="7Y5E"/>
<dbReference type="PDBsum" id="7Y7A"/>
<dbReference type="PDBsum" id="8B4N"/>
<dbReference type="EMDB" id="EMD-31393"/>
<dbReference type="EMDB" id="EMD-33558"/>
<dbReference type="EMDB" id="EMD-33605"/>
<dbReference type="EMDB" id="EMD-33618"/>
<dbReference type="EMDB" id="EMD-33658"/>
<dbReference type="EMDB" id="EMD-9976"/>
<dbReference type="SMR" id="P11393"/>
<dbReference type="IntAct" id="P11393">
    <property type="interactions" value="1"/>
</dbReference>
<dbReference type="MINT" id="P11393"/>
<dbReference type="iPTMnet" id="P11393"/>
<dbReference type="GeneID" id="17963946"/>
<dbReference type="EvolutionaryTrace" id="P11393"/>
<dbReference type="GO" id="GO:0009535">
    <property type="term" value="C:chloroplast thylakoid membrane"/>
    <property type="evidence" value="ECO:0007669"/>
    <property type="project" value="UniProtKB-SubCell"/>
</dbReference>
<dbReference type="GO" id="GO:0030089">
    <property type="term" value="C:phycobilisome"/>
    <property type="evidence" value="ECO:0007669"/>
    <property type="project" value="UniProtKB-KW"/>
</dbReference>
<dbReference type="GO" id="GO:0015979">
    <property type="term" value="P:photosynthesis"/>
    <property type="evidence" value="ECO:0007669"/>
    <property type="project" value="UniProtKB-KW"/>
</dbReference>
<dbReference type="CDD" id="cd14767">
    <property type="entry name" value="PE_beta-like"/>
    <property type="match status" value="1"/>
</dbReference>
<dbReference type="Gene3D" id="1.10.490.20">
    <property type="entry name" value="Phycocyanins"/>
    <property type="match status" value="1"/>
</dbReference>
<dbReference type="InterPro" id="IPR009050">
    <property type="entry name" value="Globin-like_sf"/>
</dbReference>
<dbReference type="InterPro" id="IPR012128">
    <property type="entry name" value="Phycobilisome_asu/bsu"/>
</dbReference>
<dbReference type="InterPro" id="IPR038719">
    <property type="entry name" value="Phycobilisome_asu/bsu_sf"/>
</dbReference>
<dbReference type="PANTHER" id="PTHR34011:SF7">
    <property type="entry name" value="C-PHYCOCYANIN BETA SUBUNIT"/>
    <property type="match status" value="1"/>
</dbReference>
<dbReference type="PANTHER" id="PTHR34011">
    <property type="entry name" value="PHYCOBILISOME 32.1 KDA LINKER POLYPEPTIDE, PHYCOCYANIN-ASSOCIATED, ROD 2-RELATED"/>
    <property type="match status" value="1"/>
</dbReference>
<dbReference type="Pfam" id="PF00502">
    <property type="entry name" value="Phycobilisome"/>
    <property type="match status" value="1"/>
</dbReference>
<dbReference type="PIRSF" id="PIRSF000081">
    <property type="entry name" value="Phycocyanin"/>
    <property type="match status" value="1"/>
</dbReference>
<dbReference type="SUPFAM" id="SSF46458">
    <property type="entry name" value="Globin-like"/>
    <property type="match status" value="1"/>
</dbReference>
<name>PHEB_PORPP</name>
<geneLocation type="chloroplast"/>
<proteinExistence type="evidence at protein level"/>
<feature type="chain" id="PRO_0000199194" description="B-phycoerythrin beta chain">
    <location>
        <begin position="1"/>
        <end position="177"/>
    </location>
</feature>
<feature type="binding site" description="covalent">
    <location>
        <position position="50"/>
    </location>
    <ligand>
        <name>phycourobilin</name>
        <dbReference type="ChEBI" id="CHEBI:189062"/>
    </ligand>
</feature>
<feature type="binding site" description="covalent">
    <location>
        <position position="61"/>
    </location>
    <ligand>
        <name>phycourobilin</name>
        <dbReference type="ChEBI" id="CHEBI:189062"/>
    </ligand>
</feature>
<feature type="binding site" description="covalent">
    <location>
        <position position="82"/>
    </location>
    <ligand>
        <name>(2R,3E)-phycoerythrobilin</name>
        <dbReference type="ChEBI" id="CHEBI:85276"/>
        <label>1</label>
    </ligand>
</feature>
<feature type="binding site" description="covalent">
    <location>
        <position position="158"/>
    </location>
    <ligand>
        <name>(2R,3E)-phycoerythrobilin</name>
        <dbReference type="ChEBI" id="CHEBI:85276"/>
        <label>2</label>
    </ligand>
</feature>
<feature type="modified residue" description="N4-methylasparagine" evidence="2">
    <location>
        <position position="72"/>
    </location>
</feature>
<feature type="sequence conflict" description="In Ref. 2; AA sequence." evidence="3" ref="2">
    <original>S</original>
    <variation>Q</variation>
    <location>
        <position position="167"/>
    </location>
</feature>
<feature type="helix" evidence="4">
    <location>
        <begin position="4"/>
        <end position="14"/>
    </location>
</feature>
<feature type="strand" evidence="5">
    <location>
        <begin position="17"/>
        <end position="20"/>
    </location>
</feature>
<feature type="helix" evidence="4">
    <location>
        <begin position="21"/>
        <end position="32"/>
    </location>
</feature>
<feature type="helix" evidence="4">
    <location>
        <begin position="34"/>
        <end position="45"/>
    </location>
</feature>
<feature type="helix" evidence="4">
    <location>
        <begin position="48"/>
        <end position="62"/>
    </location>
</feature>
<feature type="helix" evidence="4">
    <location>
        <begin position="64"/>
        <end position="67"/>
    </location>
</feature>
<feature type="helix" evidence="4">
    <location>
        <begin position="76"/>
        <end position="99"/>
    </location>
</feature>
<feature type="helix" evidence="4">
    <location>
        <begin position="103"/>
        <end position="108"/>
    </location>
</feature>
<feature type="turn" evidence="4">
    <location>
        <begin position="109"/>
        <end position="112"/>
    </location>
</feature>
<feature type="helix" evidence="4">
    <location>
        <begin position="113"/>
        <end position="120"/>
    </location>
</feature>
<feature type="helix" evidence="4">
    <location>
        <begin position="124"/>
        <end position="142"/>
    </location>
</feature>
<feature type="helix" evidence="4">
    <location>
        <begin position="159"/>
        <end position="176"/>
    </location>
</feature>